<keyword id="KW-0010">Activator</keyword>
<keyword id="KW-0238">DNA-binding</keyword>
<keyword id="KW-0312">Gluconeogenesis</keyword>
<keyword id="KW-0479">Metal-binding</keyword>
<keyword id="KW-0539">Nucleus</keyword>
<keyword id="KW-0804">Transcription</keyword>
<keyword id="KW-0805">Transcription regulation</keyword>
<keyword id="KW-0862">Zinc</keyword>
<reference key="1">
    <citation type="journal article" date="2009" name="Genome Res.">
        <title>Comparative genomics of the fungal pathogens Candida dubliniensis and Candida albicans.</title>
        <authorList>
            <person name="Jackson A.P."/>
            <person name="Gamble J.A."/>
            <person name="Yeomans T."/>
            <person name="Moran G.P."/>
            <person name="Saunders D."/>
            <person name="Harris D."/>
            <person name="Aslett M."/>
            <person name="Barrell J.F."/>
            <person name="Butler G."/>
            <person name="Citiulo F."/>
            <person name="Coleman D.C."/>
            <person name="de Groot P.W.J."/>
            <person name="Goodwin T.J."/>
            <person name="Quail M.A."/>
            <person name="McQuillan J."/>
            <person name="Munro C.A."/>
            <person name="Pain A."/>
            <person name="Poulter R.T."/>
            <person name="Rajandream M.A."/>
            <person name="Renauld H."/>
            <person name="Spiering M.J."/>
            <person name="Tivey A."/>
            <person name="Gow N.A.R."/>
            <person name="Barrell B."/>
            <person name="Sullivan D.J."/>
            <person name="Berriman M."/>
        </authorList>
    </citation>
    <scope>NUCLEOTIDE SEQUENCE [LARGE SCALE GENOMIC DNA]</scope>
    <source>
        <strain>CD36 / ATCC MYA-646 / CBS 7987 / NCPF 3949 / NRRL Y-17841</strain>
    </source>
</reference>
<feature type="chain" id="PRO_0000406458" description="Transcription activator of gluconeogenesis ERT1">
    <location>
        <begin position="1"/>
        <end position="560"/>
    </location>
</feature>
<feature type="domain" description="PAS" evidence="2">
    <location>
        <begin position="439"/>
        <end position="513"/>
    </location>
</feature>
<feature type="DNA-binding region" description="Zn(2)-C6 fungal-type" evidence="3">
    <location>
        <begin position="34"/>
        <end position="62"/>
    </location>
</feature>
<feature type="region of interest" description="Disordered" evidence="4">
    <location>
        <begin position="1"/>
        <end position="32"/>
    </location>
</feature>
<feature type="region of interest" description="Disordered" evidence="4">
    <location>
        <begin position="75"/>
        <end position="149"/>
    </location>
</feature>
<feature type="region of interest" description="Disordered" evidence="4">
    <location>
        <begin position="222"/>
        <end position="260"/>
    </location>
</feature>
<feature type="compositionally biased region" description="Low complexity" evidence="4">
    <location>
        <begin position="7"/>
        <end position="20"/>
    </location>
</feature>
<feature type="compositionally biased region" description="Low complexity" evidence="4">
    <location>
        <begin position="78"/>
        <end position="90"/>
    </location>
</feature>
<feature type="compositionally biased region" description="Polar residues" evidence="4">
    <location>
        <begin position="96"/>
        <end position="106"/>
    </location>
</feature>
<feature type="compositionally biased region" description="Polar residues" evidence="4">
    <location>
        <begin position="115"/>
        <end position="149"/>
    </location>
</feature>
<feature type="compositionally biased region" description="Polar residues" evidence="4">
    <location>
        <begin position="222"/>
        <end position="252"/>
    </location>
</feature>
<accession>B9WLA7</accession>
<sequence>MNIEQENITNTTLTNTNNVNDKPKPKRKKTSRACNHCHKAHMTCDPGRPCQRCIQRGLGSTCEDAPRKRKKYLEDVPNSSLMSSHSINSSDHLDSNGVTPMQSTLSLPMPPVQESPFSTSAPTQSQVPAYTPSTVPQRQPSYSPQVASNYSPNHKTYSATLFQHSATSPELMQTVPEYFPELHNQHYQPSANPNQKRRTNFLSTAADLEYSTLSNILQENFGHHTTSNEGTPNSHNFSPALSPHNMPTTDTNAPPPSIQLASNDQRQVTSFNNHTKHSTPSPLNTSQTKLYEDARYPKCDETINQYFLGDTESGKMVVFPDVLTAIENMKNNDPAVYVERNSKSTLSFAMSISHESNSNNGKDGQLFKEPEEIYEKVKKPFSYTPGYHSLIAYLRKRFTKPMLVKMAESMATYRPSFIACTNSLKEHDLIFMEQCFQRTLLTYDNYIKISGTPTIVWRRTGEVAYVGNEFCVLTGWPKEELIGKDKRKFIVELLDDKSVLQYFQVFSRIAFGDFLGATMTECTLLTPNPNVKIRTGCMWTLKRDVFGIPMMIVGNFLPIL</sequence>
<organism>
    <name type="scientific">Candida dubliniensis (strain CD36 / ATCC MYA-646 / CBS 7987 / NCPF 3949 / NRRL Y-17841)</name>
    <name type="common">Yeast</name>
    <dbReference type="NCBI Taxonomy" id="573826"/>
    <lineage>
        <taxon>Eukaryota</taxon>
        <taxon>Fungi</taxon>
        <taxon>Dikarya</taxon>
        <taxon>Ascomycota</taxon>
        <taxon>Saccharomycotina</taxon>
        <taxon>Pichiomycetes</taxon>
        <taxon>Debaryomycetaceae</taxon>
        <taxon>Candida/Lodderomyces clade</taxon>
        <taxon>Candida</taxon>
    </lineage>
</organism>
<name>ERT1_CANDC</name>
<protein>
    <recommendedName>
        <fullName>Transcription activator of gluconeogenesis ERT1</fullName>
    </recommendedName>
</protein>
<evidence type="ECO:0000250" key="1"/>
<evidence type="ECO:0000255" key="2">
    <source>
        <dbReference type="PROSITE-ProRule" id="PRU00140"/>
    </source>
</evidence>
<evidence type="ECO:0000255" key="3">
    <source>
        <dbReference type="PROSITE-ProRule" id="PRU00227"/>
    </source>
</evidence>
<evidence type="ECO:0000256" key="4">
    <source>
        <dbReference type="SAM" id="MobiDB-lite"/>
    </source>
</evidence>
<evidence type="ECO:0000305" key="5"/>
<gene>
    <name type="primary">ERT1</name>
    <name type="ORF">CD36_28150</name>
</gene>
<dbReference type="EMBL" id="FM992695">
    <property type="protein sequence ID" value="CAX39812.1"/>
    <property type="molecule type" value="Genomic_DNA"/>
</dbReference>
<dbReference type="RefSeq" id="XP_002421868.1">
    <property type="nucleotide sequence ID" value="XM_002421823.1"/>
</dbReference>
<dbReference type="SMR" id="B9WLA7"/>
<dbReference type="GeneID" id="8049537"/>
<dbReference type="KEGG" id="cdu:CD36_28150"/>
<dbReference type="CGD" id="CAL0000166739">
    <property type="gene designation" value="Cd36_28150"/>
</dbReference>
<dbReference type="VEuPathDB" id="FungiDB:CD36_28150"/>
<dbReference type="eggNOG" id="ENOG502R1M5">
    <property type="taxonomic scope" value="Eukaryota"/>
</dbReference>
<dbReference type="HOGENOM" id="CLU_010748_2_3_1"/>
<dbReference type="OrthoDB" id="2538135at2759"/>
<dbReference type="Proteomes" id="UP000002605">
    <property type="component" value="Chromosome R"/>
</dbReference>
<dbReference type="GO" id="GO:0005634">
    <property type="term" value="C:nucleus"/>
    <property type="evidence" value="ECO:0007669"/>
    <property type="project" value="UniProtKB-SubCell"/>
</dbReference>
<dbReference type="GO" id="GO:0000981">
    <property type="term" value="F:DNA-binding transcription factor activity, RNA polymerase II-specific"/>
    <property type="evidence" value="ECO:0007669"/>
    <property type="project" value="InterPro"/>
</dbReference>
<dbReference type="GO" id="GO:0000977">
    <property type="term" value="F:RNA polymerase II transcription regulatory region sequence-specific DNA binding"/>
    <property type="evidence" value="ECO:0007669"/>
    <property type="project" value="TreeGrafter"/>
</dbReference>
<dbReference type="GO" id="GO:0008270">
    <property type="term" value="F:zinc ion binding"/>
    <property type="evidence" value="ECO:0007669"/>
    <property type="project" value="InterPro"/>
</dbReference>
<dbReference type="GO" id="GO:0009267">
    <property type="term" value="P:cellular response to starvation"/>
    <property type="evidence" value="ECO:0007669"/>
    <property type="project" value="TreeGrafter"/>
</dbReference>
<dbReference type="GO" id="GO:0006094">
    <property type="term" value="P:gluconeogenesis"/>
    <property type="evidence" value="ECO:0007669"/>
    <property type="project" value="UniProtKB-KW"/>
</dbReference>
<dbReference type="CDD" id="cd00067">
    <property type="entry name" value="GAL4"/>
    <property type="match status" value="1"/>
</dbReference>
<dbReference type="CDD" id="cd00130">
    <property type="entry name" value="PAS"/>
    <property type="match status" value="1"/>
</dbReference>
<dbReference type="Gene3D" id="4.10.240.10">
    <property type="entry name" value="Zn(2)-C6 fungal-type DNA-binding domain"/>
    <property type="match status" value="1"/>
</dbReference>
<dbReference type="InterPro" id="IPR050335">
    <property type="entry name" value="ERT1_acuK_gluconeogen_tf"/>
</dbReference>
<dbReference type="InterPro" id="IPR000014">
    <property type="entry name" value="PAS"/>
</dbReference>
<dbReference type="InterPro" id="IPR035965">
    <property type="entry name" value="PAS-like_dom_sf"/>
</dbReference>
<dbReference type="InterPro" id="IPR056751">
    <property type="entry name" value="PAS_13"/>
</dbReference>
<dbReference type="InterPro" id="IPR036864">
    <property type="entry name" value="Zn2-C6_fun-type_DNA-bd_sf"/>
</dbReference>
<dbReference type="InterPro" id="IPR001138">
    <property type="entry name" value="Zn2Cys6_DnaBD"/>
</dbReference>
<dbReference type="PANTHER" id="PTHR47659:SF1">
    <property type="entry name" value="TRANSCRIPTION ACTIVATOR OF GLUCONEOGENESIS ERT1"/>
    <property type="match status" value="1"/>
</dbReference>
<dbReference type="PANTHER" id="PTHR47659">
    <property type="entry name" value="ZN(II)2CYS6 TRANSCRIPTION FACTOR (EUROFUNG)-RELATED"/>
    <property type="match status" value="1"/>
</dbReference>
<dbReference type="Pfam" id="PF24990">
    <property type="entry name" value="PAS_13"/>
    <property type="match status" value="2"/>
</dbReference>
<dbReference type="Pfam" id="PF00172">
    <property type="entry name" value="Zn_clus"/>
    <property type="match status" value="1"/>
</dbReference>
<dbReference type="SMART" id="SM00066">
    <property type="entry name" value="GAL4"/>
    <property type="match status" value="1"/>
</dbReference>
<dbReference type="SUPFAM" id="SSF55785">
    <property type="entry name" value="PYP-like sensor domain (PAS domain)"/>
    <property type="match status" value="1"/>
</dbReference>
<dbReference type="SUPFAM" id="SSF57701">
    <property type="entry name" value="Zn2/Cys6 DNA-binding domain"/>
    <property type="match status" value="1"/>
</dbReference>
<dbReference type="PROSITE" id="PS50112">
    <property type="entry name" value="PAS"/>
    <property type="match status" value="1"/>
</dbReference>
<dbReference type="PROSITE" id="PS00463">
    <property type="entry name" value="ZN2_CY6_FUNGAL_1"/>
    <property type="match status" value="1"/>
</dbReference>
<dbReference type="PROSITE" id="PS50048">
    <property type="entry name" value="ZN2_CY6_FUNGAL_2"/>
    <property type="match status" value="1"/>
</dbReference>
<comment type="function">
    <text evidence="1">Transcription factor which regulates nonfermentable carbon utilization. Activator of gluconeogenetic genes (By similarity).</text>
</comment>
<comment type="subcellular location">
    <subcellularLocation>
        <location evidence="3">Nucleus</location>
    </subcellularLocation>
</comment>
<comment type="similarity">
    <text evidence="5">Belongs to the ERT1/acuK family.</text>
</comment>
<proteinExistence type="inferred from homology"/>